<dbReference type="EC" id="4.2.1.-" evidence="1"/>
<dbReference type="EMBL" id="CP001001">
    <property type="protein sequence ID" value="ACB25328.1"/>
    <property type="molecule type" value="Genomic_DNA"/>
</dbReference>
<dbReference type="RefSeq" id="WP_012320292.1">
    <property type="nucleotide sequence ID" value="NC_010505.1"/>
</dbReference>
<dbReference type="SMR" id="B1LSM6"/>
<dbReference type="STRING" id="426355.Mrad2831_3350"/>
<dbReference type="GeneID" id="6139398"/>
<dbReference type="KEGG" id="mrd:Mrad2831_3350"/>
<dbReference type="PATRIC" id="fig|426355.14.peg.3424"/>
<dbReference type="eggNOG" id="COG4336">
    <property type="taxonomic scope" value="Bacteria"/>
</dbReference>
<dbReference type="HOGENOM" id="CLU_059759_0_0_5"/>
<dbReference type="OrthoDB" id="149585at2"/>
<dbReference type="Proteomes" id="UP000006589">
    <property type="component" value="Chromosome"/>
</dbReference>
<dbReference type="GO" id="GO:0016829">
    <property type="term" value="F:lyase activity"/>
    <property type="evidence" value="ECO:0007669"/>
    <property type="project" value="UniProtKB-KW"/>
</dbReference>
<dbReference type="FunFam" id="3.30.2040.10:FF:000001">
    <property type="entry name" value="D-glutamate cyclase, mitochondrial"/>
    <property type="match status" value="1"/>
</dbReference>
<dbReference type="Gene3D" id="3.40.1640.10">
    <property type="entry name" value="PSTPO5379-like"/>
    <property type="match status" value="1"/>
</dbReference>
<dbReference type="Gene3D" id="3.30.2040.10">
    <property type="entry name" value="PSTPO5379-like domain"/>
    <property type="match status" value="1"/>
</dbReference>
<dbReference type="HAMAP" id="MF_01830">
    <property type="entry name" value="Hydro_lyase"/>
    <property type="match status" value="1"/>
</dbReference>
<dbReference type="InterPro" id="IPR009906">
    <property type="entry name" value="D-Glu_cyclase"/>
</dbReference>
<dbReference type="InterPro" id="IPR038021">
    <property type="entry name" value="Putative_hydro-lyase"/>
</dbReference>
<dbReference type="InterPro" id="IPR016938">
    <property type="entry name" value="UPF0317"/>
</dbReference>
<dbReference type="NCBIfam" id="NF003969">
    <property type="entry name" value="PRK05463.1"/>
    <property type="match status" value="1"/>
</dbReference>
<dbReference type="PANTHER" id="PTHR32022">
    <property type="entry name" value="D-GLUTAMATE CYCLASE, MITOCHONDRIAL"/>
    <property type="match status" value="1"/>
</dbReference>
<dbReference type="PANTHER" id="PTHR32022:SF10">
    <property type="entry name" value="D-GLUTAMATE CYCLASE, MITOCHONDRIAL"/>
    <property type="match status" value="1"/>
</dbReference>
<dbReference type="Pfam" id="PF07286">
    <property type="entry name" value="D-Glu_cyclase"/>
    <property type="match status" value="1"/>
</dbReference>
<dbReference type="PIRSF" id="PIRSF029755">
    <property type="entry name" value="UCP029755"/>
    <property type="match status" value="1"/>
</dbReference>
<dbReference type="SUPFAM" id="SSF160920">
    <property type="entry name" value="PSTPO5379-like"/>
    <property type="match status" value="1"/>
</dbReference>
<reference key="1">
    <citation type="submission" date="2008-03" db="EMBL/GenBank/DDBJ databases">
        <title>Complete sequence of chromosome of Methylobacterium radiotolerans JCM 2831.</title>
        <authorList>
            <consortium name="US DOE Joint Genome Institute"/>
            <person name="Copeland A."/>
            <person name="Lucas S."/>
            <person name="Lapidus A."/>
            <person name="Glavina del Rio T."/>
            <person name="Dalin E."/>
            <person name="Tice H."/>
            <person name="Bruce D."/>
            <person name="Goodwin L."/>
            <person name="Pitluck S."/>
            <person name="Kiss H."/>
            <person name="Brettin T."/>
            <person name="Detter J.C."/>
            <person name="Han C."/>
            <person name="Kuske C.R."/>
            <person name="Schmutz J."/>
            <person name="Larimer F."/>
            <person name="Land M."/>
            <person name="Hauser L."/>
            <person name="Kyrpides N."/>
            <person name="Mikhailova N."/>
            <person name="Marx C.J."/>
            <person name="Richardson P."/>
        </authorList>
    </citation>
    <scope>NUCLEOTIDE SEQUENCE [LARGE SCALE GENOMIC DNA]</scope>
    <source>
        <strain>ATCC 27329 / DSM 1819 / JCM 2831 / NBRC 15690 / NCIMB 10815 / 0-1</strain>
    </source>
</reference>
<keyword id="KW-0456">Lyase</keyword>
<evidence type="ECO:0000255" key="1">
    <source>
        <dbReference type="HAMAP-Rule" id="MF_01830"/>
    </source>
</evidence>
<comment type="similarity">
    <text evidence="1">Belongs to the D-glutamate cyclase family.</text>
</comment>
<organism>
    <name type="scientific">Methylobacterium radiotolerans (strain ATCC 27329 / DSM 1819 / JCM 2831 / NBRC 15690 / NCIMB 10815 / 0-1)</name>
    <dbReference type="NCBI Taxonomy" id="426355"/>
    <lineage>
        <taxon>Bacteria</taxon>
        <taxon>Pseudomonadati</taxon>
        <taxon>Pseudomonadota</taxon>
        <taxon>Alphaproteobacteria</taxon>
        <taxon>Hyphomicrobiales</taxon>
        <taxon>Methylobacteriaceae</taxon>
        <taxon>Methylobacterium</taxon>
    </lineage>
</organism>
<protein>
    <recommendedName>
        <fullName evidence="1">Putative hydro-lyase Mrad2831_3350</fullName>
        <ecNumber evidence="1">4.2.1.-</ecNumber>
    </recommendedName>
</protein>
<proteinExistence type="inferred from homology"/>
<name>Y3350_METRJ</name>
<accession>B1LSM6</accession>
<sequence>MSQHPGADGAAPVFADAVDARRAIRAGRFRGHTSGLVPAHAQGNLMILPRAMAEDFHRFCQQNPKPCPILGVSRPGARALPTLGADLDLATDVPGYRVYEGGELAAQLPDLTGVWREDLVTFVLGCSFSFEAGLIEAGIPLRHVALGRNVAMYRTSIETQPSGPFHGPLVVSMRPMKAADAIKAVQVTARMPAVHGAPIHLGDPGLIGIRDLARPDFGDPVPIEPDELPVFWACGVTPQAVAMAARLPLCITHAPGHMLITDLLNRDLPFL</sequence>
<feature type="chain" id="PRO_0000379844" description="Putative hydro-lyase Mrad2831_3350">
    <location>
        <begin position="1"/>
        <end position="271"/>
    </location>
</feature>
<gene>
    <name type="ordered locus">Mrad2831_3350</name>
</gene>